<reference key="1">
    <citation type="journal article" date="2006" name="Proc. Natl. Acad. Sci. U.S.A.">
        <title>Identification of genes subject to positive selection in uropathogenic strains of Escherichia coli: a comparative genomics approach.</title>
        <authorList>
            <person name="Chen S.L."/>
            <person name="Hung C.-S."/>
            <person name="Xu J."/>
            <person name="Reigstad C.S."/>
            <person name="Magrini V."/>
            <person name="Sabo A."/>
            <person name="Blasiar D."/>
            <person name="Bieri T."/>
            <person name="Meyer R.R."/>
            <person name="Ozersky P."/>
            <person name="Armstrong J.R."/>
            <person name="Fulton R.S."/>
            <person name="Latreille J.P."/>
            <person name="Spieth J."/>
            <person name="Hooton T.M."/>
            <person name="Mardis E.R."/>
            <person name="Hultgren S.J."/>
            <person name="Gordon J.I."/>
        </authorList>
    </citation>
    <scope>NUCLEOTIDE SEQUENCE [LARGE SCALE GENOMIC DNA]</scope>
    <source>
        <strain>UTI89 / UPEC</strain>
    </source>
</reference>
<gene>
    <name evidence="1" type="primary">rutC</name>
    <name type="ordered locus">UTI89_C1073</name>
</gene>
<keyword id="KW-0378">Hydrolase</keyword>
<dbReference type="EC" id="3.5.-.-" evidence="1"/>
<dbReference type="EMBL" id="CP000243">
    <property type="protein sequence ID" value="ABE06557.1"/>
    <property type="molecule type" value="Genomic_DNA"/>
</dbReference>
<dbReference type="RefSeq" id="WP_001126780.1">
    <property type="nucleotide sequence ID" value="NZ_CP064825.1"/>
</dbReference>
<dbReference type="SMR" id="Q1RDK7"/>
<dbReference type="GeneID" id="75171086"/>
<dbReference type="KEGG" id="eci:UTI89_C1073"/>
<dbReference type="HOGENOM" id="CLU_100715_7_3_6"/>
<dbReference type="Proteomes" id="UP000001952">
    <property type="component" value="Chromosome"/>
</dbReference>
<dbReference type="GO" id="GO:0005829">
    <property type="term" value="C:cytosol"/>
    <property type="evidence" value="ECO:0007669"/>
    <property type="project" value="TreeGrafter"/>
</dbReference>
<dbReference type="GO" id="GO:0019239">
    <property type="term" value="F:deaminase activity"/>
    <property type="evidence" value="ECO:0007669"/>
    <property type="project" value="TreeGrafter"/>
</dbReference>
<dbReference type="GO" id="GO:0019740">
    <property type="term" value="P:nitrogen utilization"/>
    <property type="evidence" value="ECO:0007669"/>
    <property type="project" value="UniProtKB-UniRule"/>
</dbReference>
<dbReference type="GO" id="GO:0006212">
    <property type="term" value="P:uracil catabolic process"/>
    <property type="evidence" value="ECO:0007669"/>
    <property type="project" value="UniProtKB-UniRule"/>
</dbReference>
<dbReference type="CDD" id="cd00448">
    <property type="entry name" value="YjgF_YER057c_UK114_family"/>
    <property type="match status" value="1"/>
</dbReference>
<dbReference type="FunFam" id="3.30.1330.40:FF:000003">
    <property type="entry name" value="Putative aminoacrylate peracid reductase RutC"/>
    <property type="match status" value="1"/>
</dbReference>
<dbReference type="Gene3D" id="3.30.1330.40">
    <property type="entry name" value="RutC-like"/>
    <property type="match status" value="1"/>
</dbReference>
<dbReference type="HAMAP" id="MF_00831">
    <property type="entry name" value="RutC"/>
    <property type="match status" value="1"/>
</dbReference>
<dbReference type="InterPro" id="IPR019897">
    <property type="entry name" value="RidA_CS"/>
</dbReference>
<dbReference type="InterPro" id="IPR019898">
    <property type="entry name" value="RutC"/>
</dbReference>
<dbReference type="InterPro" id="IPR035959">
    <property type="entry name" value="RutC-like_sf"/>
</dbReference>
<dbReference type="InterPro" id="IPR006175">
    <property type="entry name" value="YjgF/YER057c/UK114"/>
</dbReference>
<dbReference type="NCBIfam" id="TIGR03610">
    <property type="entry name" value="RutC"/>
    <property type="match status" value="1"/>
</dbReference>
<dbReference type="PANTHER" id="PTHR11803">
    <property type="entry name" value="2-IMINOBUTANOATE/2-IMINOPROPANOATE DEAMINASE RIDA"/>
    <property type="match status" value="1"/>
</dbReference>
<dbReference type="PANTHER" id="PTHR11803:SF58">
    <property type="entry name" value="PROTEIN HMF1-RELATED"/>
    <property type="match status" value="1"/>
</dbReference>
<dbReference type="Pfam" id="PF01042">
    <property type="entry name" value="Ribonuc_L-PSP"/>
    <property type="match status" value="1"/>
</dbReference>
<dbReference type="SUPFAM" id="SSF55298">
    <property type="entry name" value="YjgF-like"/>
    <property type="match status" value="1"/>
</dbReference>
<dbReference type="PROSITE" id="PS01094">
    <property type="entry name" value="UPF0076"/>
    <property type="match status" value="1"/>
</dbReference>
<evidence type="ECO:0000255" key="1">
    <source>
        <dbReference type="HAMAP-Rule" id="MF_00831"/>
    </source>
</evidence>
<protein>
    <recommendedName>
        <fullName evidence="1">3-aminoacrylate deaminase RutC</fullName>
        <shortName evidence="1">3-AA deaminase</shortName>
        <ecNumber evidence="1">3.5.-.-</ecNumber>
    </recommendedName>
</protein>
<sequence length="128" mass="13763">MPKSVIIPAGSSAPLAPFVPGTLADGVVYVSGTLAFDQHNNVLFADDPKAQTRHVLETIRKVIETAGGTMADVTFNSIFITDWKNYAAINEIYAEFFPGDKPARFCIQCGLVKPDALVEIATIAHIAK</sequence>
<feature type="chain" id="PRO_0000402731" description="3-aminoacrylate deaminase RutC">
    <location>
        <begin position="1"/>
        <end position="128"/>
    </location>
</feature>
<organism>
    <name type="scientific">Escherichia coli (strain UTI89 / UPEC)</name>
    <dbReference type="NCBI Taxonomy" id="364106"/>
    <lineage>
        <taxon>Bacteria</taxon>
        <taxon>Pseudomonadati</taxon>
        <taxon>Pseudomonadota</taxon>
        <taxon>Gammaproteobacteria</taxon>
        <taxon>Enterobacterales</taxon>
        <taxon>Enterobacteriaceae</taxon>
        <taxon>Escherichia</taxon>
    </lineage>
</organism>
<comment type="function">
    <text evidence="1">Involved in pyrimidine catabolism. Catalyzes the deamination of 3-aminoacrylate to malonic semialdehyde, a reaction that can also occur spontaneously. RutC may facilitate the reaction and modulate the metabolic fitness, rather than catalyzing essential functions.</text>
</comment>
<comment type="catalytic activity">
    <reaction evidence="1">
        <text>(Z)-3-aminoacrylate + H2O + H(+) = 3-oxopropanoate + NH4(+)</text>
        <dbReference type="Rhea" id="RHEA:34947"/>
        <dbReference type="ChEBI" id="CHEBI:15377"/>
        <dbReference type="ChEBI" id="CHEBI:15378"/>
        <dbReference type="ChEBI" id="CHEBI:28938"/>
        <dbReference type="ChEBI" id="CHEBI:33190"/>
        <dbReference type="ChEBI" id="CHEBI:59894"/>
    </reaction>
</comment>
<comment type="subunit">
    <text evidence="1">Homotrimer.</text>
</comment>
<comment type="similarity">
    <text evidence="1">Belongs to the RutC family.</text>
</comment>
<proteinExistence type="inferred from homology"/>
<name>RUTC_ECOUT</name>
<accession>Q1RDK7</accession>